<protein>
    <recommendedName>
        <fullName>Integrator complex subunit 5-like protein</fullName>
    </recommendedName>
</protein>
<evidence type="ECO:0000250" key="1">
    <source>
        <dbReference type="UniProtKB" id="Q6P9B9"/>
    </source>
</evidence>
<evidence type="ECO:0000255" key="2"/>
<evidence type="ECO:0000256" key="3">
    <source>
        <dbReference type="SAM" id="MobiDB-lite"/>
    </source>
</evidence>
<evidence type="ECO:0000305" key="4"/>
<comment type="function">
    <text evidence="1">Component of the integrator complex, a multiprotein complex that terminates RNA polymerase II (Pol II) transcription in the promoter-proximal region of genes. The integrator complex provides a quality checkpoint during transcription elongation by driving premature transcription termination of transcripts that are unfavorably configured for transcriptional elongation: the complex terminates transcription by (1) catalyzing dephosphorylation of the C-terminal domain (CTD) of Pol II subunit polr2a, (2) degrading the exiting nascent RNA transcript via endonuclease activity and (3) promoting the release of Pol II from bound DNA. The integrator complex is also involved in terminating the synthesis of non-coding Pol II transcripts, such as enhancer RNAs (eRNAs), small nuclear RNAs (snRNAs), telomerase RNAs and long non-coding RNAs (lncRNAs).</text>
</comment>
<comment type="subunit">
    <text evidence="1">Component of the Integrator complex. The core complex associates with protein phosphatase 2A subunits, to form the Integrator-PP2A (INTAC) complex.</text>
</comment>
<comment type="subcellular location">
    <subcellularLocation>
        <location evidence="1">Nucleus</location>
    </subcellularLocation>
    <subcellularLocation>
        <location evidence="1">Cytoplasm</location>
    </subcellularLocation>
    <subcellularLocation>
        <location evidence="1">Nucleus membrane</location>
        <topology evidence="2">Multi-pass membrane protein</topology>
    </subcellularLocation>
</comment>
<comment type="similarity">
    <text evidence="4">Belongs to the Integrator subunit 5 family.</text>
</comment>
<sequence>MKEEETIEISEKEKDKERNDNQDTLTISWIEDWRNEETATKNENNKNNNSDGDSDDDDYYDDDEEIKNSRYNLFLEKILTLESNSNLKNILSLNINFKKDNKKSKETDTAATTTTTTTTTTTTTTTTTPTATANKKYIRTNNLLNNNNSSSSSSSNNNNNNNNNNNNNNNNNNNNNNNNNNNNNNNNNNNNNNNNNNNNNNNGENITYITSPLSNESLESTEECCFFLVHLPITKDLIFNQFTCLLIHLFQIEYNNTIIINNATSSSSVNSLNRSYNNSNNNNNNNYNSYNNRGNNYNNNNQQQQQQQNPNLKIRDLEGYQDCSHLKKLCLTIHDYLTQLLQRNPLIWYDSIINWSLSTLTIITRLLIILKNNKSQQQQQQQQQQQQQQQQQQQQQQQTKNKTQFPPPPPPPLRQPITPISAMVRERLDFYSFRSLLSLVLHLTRIFSIETFIEKSNVTQFLDITSKSSSSSSSSSSSSSSSSSSSSSSSSSSSSSKTIKPKKLPIYELGWILCHLGKKNPSLILGLTFNHYLKNIGLNSNNNNNKVNSKSQYIQDINCFQILEFLALQPSSYLSIIFQQHIDKIISNHKSNKNKNNTQFLKDIKTFLMLITKDDVFLSIGLPIILDKLSPFGINQFDNNNNNNNNNNNNNNNNNNNNNNNNNNNNNNNNNNNNNNNNNNKNNNNNSIKEDNSSEKDIESIKEILEKVLLGNSQVISFYSKRILLVLYHCCFGDSNDITFSSYSTSTLLQIKNQTRYNVSIKLLTSIVKDRLEKQLINKLYSPILNNNNNNNNNNNNNNNNNNNNNNNNNNNNNNNNNQQQQQQSQEIENSTFINNLNQDENITFYLNQIQCNNNNNNNNNNNNNNNNKLIKEKNNIIIKLISLIGMDSIYSSLIILNHIISKLKSNQFIQYFYTLVEQFQAVNSNTIEFFINDLFKSIDSFSHDDLITLLNNLLELVKITPPPSSSSPSNLSIYNETLKCISSNWVVLLKLIKHPNLIESNKMMSIEILYHSFNNRYNNNNNNSQSIQQLEISNNNNNIKKKEIYPSTLLSDKEMLEIRVLLEKILNLIFKSFKEKNSFERLKKFEIYKNLYLLICNGSSVYFSSTIDLILDSLFSKKTDMIIKLPILCALSPANTLPPPNYPANLVNAGSGSGNFGNGDDDDDEYGDDEYGANRNEKEELYFKQIINPSLPLSQPLIMLPMQSSLLEINYERKYYHYKFNDMNNPNHIPFTNKPKNLKKRIENNQSSAIDTTNNNNKNNEILTYKKQRMKKKKQSIQQNGNINNEQQQEEDDNDDADDQNEQDDYEKYNILNNENDLQSFIKSLVLYDGGGGSGFNNHGDINDRLQILTNQFLLRVSSPYLEPSYENYQEILPKQSHYERDIFIRNLFQQNPFLYRVLEIISIDGRELTKCLEVIKSLLVNEISYWYQCRNSYSESPIKSSHYHTTILLVKALINAEFIIHPLNLSLELFDKIKAEEISYILTSIWNFIKDYQPNPSQYQSSSSSSSSSSPPSNNTIIPTFKRVFSNCNTTPYSLTLKAIFHNHIKELCFHYARFFPKKYY</sequence>
<dbReference type="EMBL" id="AAFI02000030">
    <property type="protein sequence ID" value="EAL67774.1"/>
    <property type="molecule type" value="Genomic_DNA"/>
</dbReference>
<dbReference type="RefSeq" id="XP_641752.1">
    <property type="nucleotide sequence ID" value="XM_636660.1"/>
</dbReference>
<dbReference type="SMR" id="Q54X25"/>
<dbReference type="FunCoup" id="Q54X25">
    <property type="interactions" value="93"/>
</dbReference>
<dbReference type="STRING" id="44689.Q54X25"/>
<dbReference type="PaxDb" id="44689-DDB0234101"/>
<dbReference type="EnsemblProtists" id="EAL67774">
    <property type="protein sequence ID" value="EAL67774"/>
    <property type="gene ID" value="DDB_G0279251"/>
</dbReference>
<dbReference type="GeneID" id="8621950"/>
<dbReference type="KEGG" id="ddi:DDB_G0279251"/>
<dbReference type="dictyBase" id="DDB_G0279251"/>
<dbReference type="VEuPathDB" id="AmoebaDB:DDB_G0279251"/>
<dbReference type="eggNOG" id="ENOG502RAR0">
    <property type="taxonomic scope" value="Eukaryota"/>
</dbReference>
<dbReference type="HOGENOM" id="CLU_245839_0_0_1"/>
<dbReference type="InParanoid" id="Q54X25"/>
<dbReference type="OMA" id="SIFHNHI"/>
<dbReference type="Reactome" id="R-DDI-6807505">
    <property type="pathway name" value="RNA polymerase II transcribes snRNA genes"/>
</dbReference>
<dbReference type="PRO" id="PR:Q54X25"/>
<dbReference type="Proteomes" id="UP000002195">
    <property type="component" value="Chromosome 3"/>
</dbReference>
<dbReference type="GO" id="GO:0005737">
    <property type="term" value="C:cytoplasm"/>
    <property type="evidence" value="ECO:0007669"/>
    <property type="project" value="UniProtKB-SubCell"/>
</dbReference>
<dbReference type="GO" id="GO:0160232">
    <property type="term" value="C:INTAC complex"/>
    <property type="evidence" value="ECO:0000250"/>
    <property type="project" value="UniProtKB"/>
</dbReference>
<dbReference type="GO" id="GO:0032039">
    <property type="term" value="C:integrator complex"/>
    <property type="evidence" value="ECO:0000318"/>
    <property type="project" value="GO_Central"/>
</dbReference>
<dbReference type="GO" id="GO:0031965">
    <property type="term" value="C:nuclear membrane"/>
    <property type="evidence" value="ECO:0007669"/>
    <property type="project" value="UniProtKB-SubCell"/>
</dbReference>
<dbReference type="GO" id="GO:0160240">
    <property type="term" value="P:RNA polymerase II transcription initiation surveillance"/>
    <property type="evidence" value="ECO:0000250"/>
    <property type="project" value="UniProtKB"/>
</dbReference>
<dbReference type="GO" id="GO:0034472">
    <property type="term" value="P:snRNA 3'-end processing"/>
    <property type="evidence" value="ECO:0000318"/>
    <property type="project" value="GO_Central"/>
</dbReference>
<dbReference type="InterPro" id="IPR040316">
    <property type="entry name" value="INTS5"/>
</dbReference>
<dbReference type="InterPro" id="IPR029444">
    <property type="entry name" value="INTS5_C"/>
</dbReference>
<dbReference type="PANTHER" id="PTHR31697">
    <property type="entry name" value="INTEGRATOR COMPLEX SUBUNIT 5"/>
    <property type="match status" value="1"/>
</dbReference>
<dbReference type="PANTHER" id="PTHR31697:SF2">
    <property type="entry name" value="INTEGRATOR COMPLEX SUBUNIT 5"/>
    <property type="match status" value="1"/>
</dbReference>
<dbReference type="Pfam" id="PF14838">
    <property type="entry name" value="INTS5_C"/>
    <property type="match status" value="1"/>
</dbReference>
<dbReference type="SUPFAM" id="SSF81995">
    <property type="entry name" value="beta-sandwich domain of Sec23/24"/>
    <property type="match status" value="1"/>
</dbReference>
<proteinExistence type="inferred from homology"/>
<organism>
    <name type="scientific">Dictyostelium discoideum</name>
    <name type="common">Social amoeba</name>
    <dbReference type="NCBI Taxonomy" id="44689"/>
    <lineage>
        <taxon>Eukaryota</taxon>
        <taxon>Amoebozoa</taxon>
        <taxon>Evosea</taxon>
        <taxon>Eumycetozoa</taxon>
        <taxon>Dictyostelia</taxon>
        <taxon>Dictyosteliales</taxon>
        <taxon>Dictyosteliaceae</taxon>
        <taxon>Dictyostelium</taxon>
    </lineage>
</organism>
<feature type="chain" id="PRO_0000344377" description="Integrator complex subunit 5-like protein">
    <location>
        <begin position="1"/>
        <end position="1563"/>
    </location>
</feature>
<feature type="transmembrane region" description="Helical" evidence="2">
    <location>
        <begin position="350"/>
        <end position="370"/>
    </location>
</feature>
<feature type="transmembrane region" description="Helical" evidence="2">
    <location>
        <begin position="877"/>
        <end position="897"/>
    </location>
</feature>
<feature type="region of interest" description="Disordered" evidence="3">
    <location>
        <begin position="1"/>
        <end position="63"/>
    </location>
</feature>
<feature type="region of interest" description="Disordered" evidence="3">
    <location>
        <begin position="102"/>
        <end position="208"/>
    </location>
</feature>
<feature type="region of interest" description="Disordered" evidence="3">
    <location>
        <begin position="270"/>
        <end position="310"/>
    </location>
</feature>
<feature type="region of interest" description="Disordered" evidence="3">
    <location>
        <begin position="381"/>
        <end position="417"/>
    </location>
</feature>
<feature type="region of interest" description="Disordered" evidence="3">
    <location>
        <begin position="466"/>
        <end position="498"/>
    </location>
</feature>
<feature type="region of interest" description="Disordered" evidence="3">
    <location>
        <begin position="637"/>
        <end position="694"/>
    </location>
</feature>
<feature type="region of interest" description="Disordered" evidence="3">
    <location>
        <begin position="784"/>
        <end position="828"/>
    </location>
</feature>
<feature type="region of interest" description="Disordered" evidence="3">
    <location>
        <begin position="1154"/>
        <end position="1173"/>
    </location>
</feature>
<feature type="region of interest" description="Disordered" evidence="3">
    <location>
        <begin position="1268"/>
        <end position="1303"/>
    </location>
</feature>
<feature type="compositionally biased region" description="Basic and acidic residues" evidence="3">
    <location>
        <begin position="1"/>
        <end position="21"/>
    </location>
</feature>
<feature type="compositionally biased region" description="Basic and acidic residues" evidence="3">
    <location>
        <begin position="31"/>
        <end position="44"/>
    </location>
</feature>
<feature type="compositionally biased region" description="Acidic residues" evidence="3">
    <location>
        <begin position="52"/>
        <end position="63"/>
    </location>
</feature>
<feature type="compositionally biased region" description="Low complexity" evidence="3">
    <location>
        <begin position="109"/>
        <end position="133"/>
    </location>
</feature>
<feature type="compositionally biased region" description="Low complexity" evidence="3">
    <location>
        <begin position="141"/>
        <end position="202"/>
    </location>
</feature>
<feature type="compositionally biased region" description="Low complexity" evidence="3">
    <location>
        <begin position="381"/>
        <end position="398"/>
    </location>
</feature>
<feature type="compositionally biased region" description="Pro residues" evidence="3">
    <location>
        <begin position="405"/>
        <end position="414"/>
    </location>
</feature>
<feature type="compositionally biased region" description="Low complexity" evidence="3">
    <location>
        <begin position="468"/>
        <end position="496"/>
    </location>
</feature>
<feature type="compositionally biased region" description="Low complexity" evidence="3">
    <location>
        <begin position="639"/>
        <end position="686"/>
    </location>
</feature>
<feature type="compositionally biased region" description="Low complexity" evidence="3">
    <location>
        <begin position="786"/>
        <end position="824"/>
    </location>
</feature>
<feature type="compositionally biased region" description="Acidic residues" evidence="3">
    <location>
        <begin position="1160"/>
        <end position="1172"/>
    </location>
</feature>
<feature type="compositionally biased region" description="Low complexity" evidence="3">
    <location>
        <begin position="1277"/>
        <end position="1288"/>
    </location>
</feature>
<feature type="compositionally biased region" description="Acidic residues" evidence="3">
    <location>
        <begin position="1289"/>
        <end position="1303"/>
    </location>
</feature>
<gene>
    <name type="ORF">DDB_G0279251</name>
</gene>
<name>INT5_DICDI</name>
<reference key="1">
    <citation type="journal article" date="2005" name="Nature">
        <title>The genome of the social amoeba Dictyostelium discoideum.</title>
        <authorList>
            <person name="Eichinger L."/>
            <person name="Pachebat J.A."/>
            <person name="Gloeckner G."/>
            <person name="Rajandream M.A."/>
            <person name="Sucgang R."/>
            <person name="Berriman M."/>
            <person name="Song J."/>
            <person name="Olsen R."/>
            <person name="Szafranski K."/>
            <person name="Xu Q."/>
            <person name="Tunggal B."/>
            <person name="Kummerfeld S."/>
            <person name="Madera M."/>
            <person name="Konfortov B.A."/>
            <person name="Rivero F."/>
            <person name="Bankier A.T."/>
            <person name="Lehmann R."/>
            <person name="Hamlin N."/>
            <person name="Davies R."/>
            <person name="Gaudet P."/>
            <person name="Fey P."/>
            <person name="Pilcher K."/>
            <person name="Chen G."/>
            <person name="Saunders D."/>
            <person name="Sodergren E.J."/>
            <person name="Davis P."/>
            <person name="Kerhornou A."/>
            <person name="Nie X."/>
            <person name="Hall N."/>
            <person name="Anjard C."/>
            <person name="Hemphill L."/>
            <person name="Bason N."/>
            <person name="Farbrother P."/>
            <person name="Desany B."/>
            <person name="Just E."/>
            <person name="Morio T."/>
            <person name="Rost R."/>
            <person name="Churcher C.M."/>
            <person name="Cooper J."/>
            <person name="Haydock S."/>
            <person name="van Driessche N."/>
            <person name="Cronin A."/>
            <person name="Goodhead I."/>
            <person name="Muzny D.M."/>
            <person name="Mourier T."/>
            <person name="Pain A."/>
            <person name="Lu M."/>
            <person name="Harper D."/>
            <person name="Lindsay R."/>
            <person name="Hauser H."/>
            <person name="James K.D."/>
            <person name="Quiles M."/>
            <person name="Madan Babu M."/>
            <person name="Saito T."/>
            <person name="Buchrieser C."/>
            <person name="Wardroper A."/>
            <person name="Felder M."/>
            <person name="Thangavelu M."/>
            <person name="Johnson D."/>
            <person name="Knights A."/>
            <person name="Loulseged H."/>
            <person name="Mungall K.L."/>
            <person name="Oliver K."/>
            <person name="Price C."/>
            <person name="Quail M.A."/>
            <person name="Urushihara H."/>
            <person name="Hernandez J."/>
            <person name="Rabbinowitsch E."/>
            <person name="Steffen D."/>
            <person name="Sanders M."/>
            <person name="Ma J."/>
            <person name="Kohara Y."/>
            <person name="Sharp S."/>
            <person name="Simmonds M.N."/>
            <person name="Spiegler S."/>
            <person name="Tivey A."/>
            <person name="Sugano S."/>
            <person name="White B."/>
            <person name="Walker D."/>
            <person name="Woodward J.R."/>
            <person name="Winckler T."/>
            <person name="Tanaka Y."/>
            <person name="Shaulsky G."/>
            <person name="Schleicher M."/>
            <person name="Weinstock G.M."/>
            <person name="Rosenthal A."/>
            <person name="Cox E.C."/>
            <person name="Chisholm R.L."/>
            <person name="Gibbs R.A."/>
            <person name="Loomis W.F."/>
            <person name="Platzer M."/>
            <person name="Kay R.R."/>
            <person name="Williams J.G."/>
            <person name="Dear P.H."/>
            <person name="Noegel A.A."/>
            <person name="Barrell B.G."/>
            <person name="Kuspa A."/>
        </authorList>
    </citation>
    <scope>NUCLEOTIDE SEQUENCE [LARGE SCALE GENOMIC DNA]</scope>
    <source>
        <strain>AX4</strain>
    </source>
</reference>
<keyword id="KW-0963">Cytoplasm</keyword>
<keyword id="KW-0472">Membrane</keyword>
<keyword id="KW-0539">Nucleus</keyword>
<keyword id="KW-1185">Reference proteome</keyword>
<keyword id="KW-0812">Transmembrane</keyword>
<keyword id="KW-1133">Transmembrane helix</keyword>
<accession>Q54X25</accession>